<comment type="function">
    <text evidence="1">Catalyzes the NADPH-dependent reduction of L-glutamate 5-phosphate into L-glutamate 5-semialdehyde and phosphate. The product spontaneously undergoes cyclization to form 1-pyrroline-5-carboxylate.</text>
</comment>
<comment type="catalytic activity">
    <reaction evidence="1">
        <text>L-glutamate 5-semialdehyde + phosphate + NADP(+) = L-glutamyl 5-phosphate + NADPH + H(+)</text>
        <dbReference type="Rhea" id="RHEA:19541"/>
        <dbReference type="ChEBI" id="CHEBI:15378"/>
        <dbReference type="ChEBI" id="CHEBI:43474"/>
        <dbReference type="ChEBI" id="CHEBI:57783"/>
        <dbReference type="ChEBI" id="CHEBI:58066"/>
        <dbReference type="ChEBI" id="CHEBI:58274"/>
        <dbReference type="ChEBI" id="CHEBI:58349"/>
        <dbReference type="EC" id="1.2.1.41"/>
    </reaction>
</comment>
<comment type="pathway">
    <text evidence="1">Amino-acid biosynthesis; L-proline biosynthesis; L-glutamate 5-semialdehyde from L-glutamate: step 2/2.</text>
</comment>
<comment type="subcellular location">
    <subcellularLocation>
        <location evidence="1">Cytoplasm</location>
    </subcellularLocation>
</comment>
<comment type="similarity">
    <text evidence="1">Belongs to the gamma-glutamyl phosphate reductase family.</text>
</comment>
<dbReference type="EC" id="1.2.1.41" evidence="1"/>
<dbReference type="EMBL" id="CP000112">
    <property type="protein sequence ID" value="ABB38430.1"/>
    <property type="molecule type" value="Genomic_DNA"/>
</dbReference>
<dbReference type="RefSeq" id="WP_011367584.1">
    <property type="nucleotide sequence ID" value="NC_007519.1"/>
</dbReference>
<dbReference type="SMR" id="Q311G6"/>
<dbReference type="STRING" id="207559.Dde_1633"/>
<dbReference type="KEGG" id="dde:Dde_1633"/>
<dbReference type="eggNOG" id="COG0014">
    <property type="taxonomic scope" value="Bacteria"/>
</dbReference>
<dbReference type="HOGENOM" id="CLU_030231_0_0_7"/>
<dbReference type="UniPathway" id="UPA00098">
    <property type="reaction ID" value="UER00360"/>
</dbReference>
<dbReference type="Proteomes" id="UP000002710">
    <property type="component" value="Chromosome"/>
</dbReference>
<dbReference type="GO" id="GO:0005737">
    <property type="term" value="C:cytoplasm"/>
    <property type="evidence" value="ECO:0007669"/>
    <property type="project" value="UniProtKB-SubCell"/>
</dbReference>
<dbReference type="GO" id="GO:0004350">
    <property type="term" value="F:glutamate-5-semialdehyde dehydrogenase activity"/>
    <property type="evidence" value="ECO:0007669"/>
    <property type="project" value="UniProtKB-UniRule"/>
</dbReference>
<dbReference type="GO" id="GO:0050661">
    <property type="term" value="F:NADP binding"/>
    <property type="evidence" value="ECO:0007669"/>
    <property type="project" value="InterPro"/>
</dbReference>
<dbReference type="GO" id="GO:0055129">
    <property type="term" value="P:L-proline biosynthetic process"/>
    <property type="evidence" value="ECO:0007669"/>
    <property type="project" value="UniProtKB-UniRule"/>
</dbReference>
<dbReference type="CDD" id="cd07079">
    <property type="entry name" value="ALDH_F18-19_ProA-GPR"/>
    <property type="match status" value="1"/>
</dbReference>
<dbReference type="FunFam" id="3.40.309.10:FF:000006">
    <property type="entry name" value="Gamma-glutamyl phosphate reductase"/>
    <property type="match status" value="1"/>
</dbReference>
<dbReference type="Gene3D" id="3.40.605.10">
    <property type="entry name" value="Aldehyde Dehydrogenase, Chain A, domain 1"/>
    <property type="match status" value="1"/>
</dbReference>
<dbReference type="Gene3D" id="3.40.309.10">
    <property type="entry name" value="Aldehyde Dehydrogenase, Chain A, domain 2"/>
    <property type="match status" value="1"/>
</dbReference>
<dbReference type="HAMAP" id="MF_00412">
    <property type="entry name" value="ProA"/>
    <property type="match status" value="1"/>
</dbReference>
<dbReference type="InterPro" id="IPR016161">
    <property type="entry name" value="Ald_DH/histidinol_DH"/>
</dbReference>
<dbReference type="InterPro" id="IPR016163">
    <property type="entry name" value="Ald_DH_C"/>
</dbReference>
<dbReference type="InterPro" id="IPR016162">
    <property type="entry name" value="Ald_DH_N"/>
</dbReference>
<dbReference type="InterPro" id="IPR015590">
    <property type="entry name" value="Aldehyde_DH_dom"/>
</dbReference>
<dbReference type="InterPro" id="IPR012134">
    <property type="entry name" value="Glu-5-SA_DH"/>
</dbReference>
<dbReference type="InterPro" id="IPR000965">
    <property type="entry name" value="GPR_dom"/>
</dbReference>
<dbReference type="NCBIfam" id="NF001221">
    <property type="entry name" value="PRK00197.1"/>
    <property type="match status" value="1"/>
</dbReference>
<dbReference type="NCBIfam" id="TIGR00407">
    <property type="entry name" value="proA"/>
    <property type="match status" value="1"/>
</dbReference>
<dbReference type="PANTHER" id="PTHR11063:SF8">
    <property type="entry name" value="DELTA-1-PYRROLINE-5-CARBOXYLATE SYNTHASE"/>
    <property type="match status" value="1"/>
</dbReference>
<dbReference type="PANTHER" id="PTHR11063">
    <property type="entry name" value="GLUTAMATE SEMIALDEHYDE DEHYDROGENASE"/>
    <property type="match status" value="1"/>
</dbReference>
<dbReference type="Pfam" id="PF00171">
    <property type="entry name" value="Aldedh"/>
    <property type="match status" value="1"/>
</dbReference>
<dbReference type="PIRSF" id="PIRSF000151">
    <property type="entry name" value="GPR"/>
    <property type="match status" value="1"/>
</dbReference>
<dbReference type="SUPFAM" id="SSF53720">
    <property type="entry name" value="ALDH-like"/>
    <property type="match status" value="1"/>
</dbReference>
<keyword id="KW-0028">Amino-acid biosynthesis</keyword>
<keyword id="KW-0963">Cytoplasm</keyword>
<keyword id="KW-0521">NADP</keyword>
<keyword id="KW-0560">Oxidoreductase</keyword>
<keyword id="KW-0641">Proline biosynthesis</keyword>
<keyword id="KW-1185">Reference proteome</keyword>
<protein>
    <recommendedName>
        <fullName evidence="1">Gamma-glutamyl phosphate reductase</fullName>
        <shortName evidence="1">GPR</shortName>
        <ecNumber evidence="1">1.2.1.41</ecNumber>
    </recommendedName>
    <alternativeName>
        <fullName evidence="1">Glutamate-5-semialdehyde dehydrogenase</fullName>
    </alternativeName>
    <alternativeName>
        <fullName evidence="1">Glutamyl-gamma-semialdehyde dehydrogenase</fullName>
        <shortName evidence="1">GSA dehydrogenase</shortName>
    </alternativeName>
</protein>
<proteinExistence type="inferred from homology"/>
<evidence type="ECO:0000255" key="1">
    <source>
        <dbReference type="HAMAP-Rule" id="MF_00412"/>
    </source>
</evidence>
<organism>
    <name type="scientific">Oleidesulfovibrio alaskensis (strain ATCC BAA-1058 / DSM 17464 / G20)</name>
    <name type="common">Desulfovibrio alaskensis</name>
    <dbReference type="NCBI Taxonomy" id="207559"/>
    <lineage>
        <taxon>Bacteria</taxon>
        <taxon>Pseudomonadati</taxon>
        <taxon>Thermodesulfobacteriota</taxon>
        <taxon>Desulfovibrionia</taxon>
        <taxon>Desulfovibrionales</taxon>
        <taxon>Desulfovibrionaceae</taxon>
        <taxon>Oleidesulfovibrio</taxon>
    </lineage>
</organism>
<gene>
    <name evidence="1" type="primary">proA</name>
    <name type="ordered locus">Dde_1633</name>
</gene>
<name>PROA_OLEA2</name>
<sequence>MDIQETINQMGKKAAAAARAMRAASPSAKTSALLSLAQLIRQENKAITEANARDLAAAADRGLDAPRMDRLRLTDAVIEEMARACEFVAGLPDPIGATEKQWQRPNGLLVGKMRIPLGVISMIYESRPNVTVDSGILCLKAGNAVILRGGSEAFHSNMMLASLIHRALILAGLPQDAVQVVPSTDRGAIKALCELEEYIDVIIPRGGETLIRTVVADARMPVLKHYKGVCHAYVDEGADLEQACEIIFNAKVQRPGVCNALEGLLVHRSEAHTLLPAVAQKLGDAGVSFRACPRALPLLAPHGVPMAETDPGTEFHDLVMVVKVVDSQDEAQDYIAQHGSNHTEIICTRNHQNAMRFVREVDASMVAVNASSRFNDGGQLGLGAEIGISTSKLHSYGPMGVEELTTTKFVVLGNGQIRQ</sequence>
<accession>Q311G6</accession>
<feature type="chain" id="PRO_0000230003" description="Gamma-glutamyl phosphate reductase">
    <location>
        <begin position="1"/>
        <end position="419"/>
    </location>
</feature>
<reference key="1">
    <citation type="journal article" date="2011" name="J. Bacteriol.">
        <title>Complete genome sequence and updated annotation of Desulfovibrio alaskensis G20.</title>
        <authorList>
            <person name="Hauser L.J."/>
            <person name="Land M.L."/>
            <person name="Brown S.D."/>
            <person name="Larimer F."/>
            <person name="Keller K.L."/>
            <person name="Rapp-Giles B.J."/>
            <person name="Price M.N."/>
            <person name="Lin M."/>
            <person name="Bruce D.C."/>
            <person name="Detter J.C."/>
            <person name="Tapia R."/>
            <person name="Han C.S."/>
            <person name="Goodwin L.A."/>
            <person name="Cheng J.F."/>
            <person name="Pitluck S."/>
            <person name="Copeland A."/>
            <person name="Lucas S."/>
            <person name="Nolan M."/>
            <person name="Lapidus A.L."/>
            <person name="Palumbo A.V."/>
            <person name="Wall J.D."/>
        </authorList>
    </citation>
    <scope>NUCLEOTIDE SEQUENCE [LARGE SCALE GENOMIC DNA]</scope>
    <source>
        <strain>ATCC BAA-1058 / DSM 17464 / G20</strain>
    </source>
</reference>